<feature type="signal peptide" evidence="5">
    <location>
        <begin position="1"/>
        <end position="20"/>
    </location>
</feature>
<feature type="chain" id="PRO_0000456178" description="Transforming growth factor beta-2 proprotein">
    <location>
        <begin position="21"/>
        <end position="414"/>
    </location>
</feature>
<feature type="chain" id="PRO_0000445552" description="Latency-associated peptide" evidence="7 8 9">
    <location>
        <begin position="21"/>
        <end position="302"/>
    </location>
</feature>
<feature type="chain" id="PRO_0000051608" description="Transforming growth factor beta-2" evidence="7 8 9">
    <location>
        <begin position="303"/>
        <end position="414"/>
    </location>
</feature>
<feature type="glycosylation site" description="N-linked (GlcNAc...) asparagine" evidence="5">
    <location>
        <position position="72"/>
    </location>
</feature>
<feature type="glycosylation site" description="N-linked (GlcNAc...) asparagine" evidence="5">
    <location>
        <position position="140"/>
    </location>
</feature>
<feature type="glycosylation site" description="N-linked (GlcNAc...) asparagine" evidence="5">
    <location>
        <position position="241"/>
    </location>
</feature>
<feature type="disulfide bond" evidence="4">
    <location>
        <begin position="309"/>
        <end position="318"/>
    </location>
</feature>
<feature type="disulfide bond" evidence="4">
    <location>
        <begin position="317"/>
        <end position="380"/>
    </location>
</feature>
<feature type="disulfide bond" evidence="4">
    <location>
        <begin position="346"/>
        <end position="411"/>
    </location>
</feature>
<feature type="disulfide bond" evidence="4">
    <location>
        <begin position="350"/>
        <end position="413"/>
    </location>
</feature>
<feature type="disulfide bond" description="Interchain" evidence="4">
    <location>
        <position position="379"/>
    </location>
</feature>
<protein>
    <recommendedName>
        <fullName>Transforming growth factor beta-2 proprotein</fullName>
    </recommendedName>
    <alternativeName>
        <fullName>Milk growth factor</fullName>
        <shortName>MGF</shortName>
    </alternativeName>
    <component>
        <recommendedName>
            <fullName>Latency-associated peptide</fullName>
            <shortName>LAP</shortName>
        </recommendedName>
    </component>
    <component>
        <recommendedName>
            <fullName>Transforming growth factor beta-2</fullName>
            <shortName>TGF-beta-2</shortName>
        </recommendedName>
    </component>
</protein>
<reference key="1">
    <citation type="journal article" date="2009" name="Science">
        <title>The genome sequence of taurine cattle: a window to ruminant biology and evolution.</title>
        <authorList>
            <consortium name="The bovine genome sequencing and analysis consortium"/>
        </authorList>
    </citation>
    <scope>NUCLEOTIDE SEQUENCE [LARGE SCALE GENOMIC DNA]</scope>
    <source>
        <strain>Hereford</strain>
    </source>
</reference>
<reference key="2">
    <citation type="journal article" date="1991" name="J. Protein Chem.">
        <title>Separation, purification, and sequence identification of TGF-beta 1 and TGF-beta 2 from bovine milk.</title>
        <authorList>
            <person name="Jin Y."/>
            <person name="Cox D.A."/>
            <person name="Knecht R."/>
            <person name="Raschdorf F."/>
            <person name="Cerletti N."/>
        </authorList>
    </citation>
    <scope>PROTEIN SEQUENCE OF 303-414</scope>
    <source>
        <tissue>Milk</tissue>
    </source>
</reference>
<reference key="3">
    <citation type="journal article" date="1987" name="J. Biol. Chem.">
        <title>Cartilage-inducing factor-B is a unique protein structurally and functionally related to transforming growth factor-beta.</title>
        <authorList>
            <person name="Seyedin S.M."/>
            <person name="Segarini P.R."/>
            <person name="Rosen D.M."/>
            <person name="Thompson A.Y."/>
            <person name="Bentz H."/>
            <person name="Graycar J."/>
        </authorList>
    </citation>
    <scope>PROTEIN SEQUENCE OF 303-332</scope>
    <source>
        <tissue>Bone</tissue>
    </source>
</reference>
<reference key="4">
    <citation type="journal article" date="1991" name="Eur. J. Biochem.">
        <title>Isolation and characterisation of milk growth factor, a transforming-growth-factor-beta 2-related polypeptide, from bovine milk.</title>
        <authorList>
            <person name="Cox D.A."/>
            <person name="David A."/>
            <person name="Buerk R.R."/>
        </authorList>
    </citation>
    <scope>PROTEIN SEQUENCE OF 303-321</scope>
    <source>
        <tissue>Milk</tissue>
    </source>
</reference>
<reference key="5">
    <citation type="journal article" date="1992" name="J. Biol. Chem.">
        <title>Purification and characterization of transforming growth factor-beta 2.3 and -beta 1.2 heterodimers from bovine bone.</title>
        <authorList>
            <person name="Ogawa Y."/>
            <person name="Schmidt D.K."/>
            <person name="Dasch J.R."/>
            <person name="Chang R.J."/>
            <person name="Glaser C.B."/>
        </authorList>
    </citation>
    <scope>SUBUNIT</scope>
    <source>
        <tissue>Bone</tissue>
    </source>
</reference>
<organism>
    <name type="scientific">Bos taurus</name>
    <name type="common">Bovine</name>
    <dbReference type="NCBI Taxonomy" id="9913"/>
    <lineage>
        <taxon>Eukaryota</taxon>
        <taxon>Metazoa</taxon>
        <taxon>Chordata</taxon>
        <taxon>Craniata</taxon>
        <taxon>Vertebrata</taxon>
        <taxon>Euteleostomi</taxon>
        <taxon>Mammalia</taxon>
        <taxon>Eutheria</taxon>
        <taxon>Laurasiatheria</taxon>
        <taxon>Artiodactyla</taxon>
        <taxon>Ruminantia</taxon>
        <taxon>Pecora</taxon>
        <taxon>Bovidae</taxon>
        <taxon>Bovinae</taxon>
        <taxon>Bos</taxon>
    </lineage>
</organism>
<evidence type="ECO:0000250" key="1">
    <source>
        <dbReference type="UniProtKB" id="P01137"/>
    </source>
</evidence>
<evidence type="ECO:0000250" key="2">
    <source>
        <dbReference type="UniProtKB" id="P04202"/>
    </source>
</evidence>
<evidence type="ECO:0000250" key="3">
    <source>
        <dbReference type="UniProtKB" id="P27090"/>
    </source>
</evidence>
<evidence type="ECO:0000250" key="4">
    <source>
        <dbReference type="UniProtKB" id="P61812"/>
    </source>
</evidence>
<evidence type="ECO:0000255" key="5"/>
<evidence type="ECO:0000305" key="6"/>
<evidence type="ECO:0000305" key="7">
    <source>
    </source>
</evidence>
<evidence type="ECO:0000305" key="8">
    <source>
    </source>
</evidence>
<evidence type="ECO:0000305" key="9">
    <source>
    </source>
</evidence>
<gene>
    <name type="primary">TGFB2</name>
</gene>
<name>TGFB2_BOVIN</name>
<keyword id="KW-0165">Cleavage on pair of basic residues</keyword>
<keyword id="KW-0903">Direct protein sequencing</keyword>
<keyword id="KW-1015">Disulfide bond</keyword>
<keyword id="KW-0272">Extracellular matrix</keyword>
<keyword id="KW-0325">Glycoprotein</keyword>
<keyword id="KW-0339">Growth factor</keyword>
<keyword id="KW-0497">Mitogen</keyword>
<keyword id="KW-1185">Reference proteome</keyword>
<keyword id="KW-0964">Secreted</keyword>
<keyword id="KW-0732">Signal</keyword>
<proteinExistence type="evidence at protein level"/>
<sequence length="414" mass="47692">MHYCVLSAFLLLHLVTVALSLSTCSTLDMDQFMRKRIEAIRGQILSKLKLTSPPEDYPEPEEVPPEVISIYNSTRDLLQEKASRRAAACERERSDEEYYAKEVYKIDMPSFLPSENAIPPTFYRPYFRIVRFDVSSMEKNASNLVKAEFRVFRLQNPKARVPEQRIELYQILKSKDLTSPTQRYIDSKVVKTRAEGEWLSFDVTDAVHEWLHHKDRNLGFKISLHCPCCTFVPSNNYIIPNKSEELEARFAGIDGTSTYTSGDQKTIKSTRKKNSGKSPHLLLMLLPSYRLESQQSNRRKKRALDAAYCFRNVQDNCCLRPLYIDFKRDLGWKWIHEPKGYNANFCAGACPYLWSSDTQHSRVLSLYNTINPEASASPCCVSQDLEPLTILYYIGKTPKIEQLSNMIVKSCKCS</sequence>
<accession>P21214</accession>
<comment type="function">
    <molecule>Transforming growth factor beta-2 proprotein</molecule>
    <text evidence="1 2">Precursor of the Latency-associated peptide (LAP) and Transforming growth factor beta-2 (TGF-beta-2) chains, which constitute the regulatory and active subunit of TGF-beta-2, respectively.</text>
</comment>
<comment type="function">
    <molecule>Latency-associated peptide</molecule>
    <text evidence="1 2">Required to maintain the Transforming growth factor beta-2 (TGF-beta-2) chain in a latent state during storage in extracellular matrix. Associates non-covalently with TGF-beta-2 and regulates its activation via interaction with 'milieu molecules', such as LTBP1 and LRRC32/GARP, that control activation of TGF-beta-2.</text>
</comment>
<comment type="function">
    <molecule>Transforming growth factor beta-2</molecule>
    <text evidence="1 2 4">Multifunctional protein that regulates various processes such as angiogenesis and heart development (By similarity). Activation into mature form follows different steps: following cleavage of the proprotein in the Golgi apparatus, Latency-associated peptide (LAP) and Transforming growth factor beta-2 (TGF-beta-2) chains remain non-covalently linked rendering TGF-beta-2 inactive during storage in extracellular matrix (By similarity). At the same time, LAP chain interacts with 'milieu molecules', such as LTBP1 and LRRC32/GARP, that control activation of TGF-beta-2 and maintain it in a latent state during storage in extracellular milieus (By similarity). Once activated following release of LAP, TGF-beta-2 acts by binding to TGF-beta receptors (TGFBR1 and TGFBR2), which transduce signal (By similarity).</text>
</comment>
<comment type="subunit">
    <text evidence="1 3 4">Interacts with the serine proteases, HTRA1 and HTRA3 (By similarity). Interacts with ASPN (By similarity). Interacts with MFAP5 (By similarity).</text>
</comment>
<comment type="subunit">
    <molecule>Latency-associated peptide</molecule>
    <text evidence="1 3 4">Interacts with Transforming growth factor beta-2 (TGF-beta-2) chain; interaction is non-covalent and maintains (TGF-beta-2) in a latent state (By similarity). Interacts with LRRC32/GARP; leading to regulate activation of TGF-beta-2 (By similarity). Interacts with NREP; the interaction results in a decrease in TGFB2 autoinduction (By similarity).</text>
</comment>
<comment type="subunit">
    <molecule>Transforming growth factor beta-2</molecule>
    <text evidence="1 3 4">Transforming growth factor beta-2: Homodimer; disulfide-linked (By similarity). Transforming growth factor beta-2: Interacts with TGF-beta receptors (TGFBR1 and TGFBR2), leading to signal transduction (By similarity).</text>
</comment>
<comment type="subcellular location">
    <molecule>Latency-associated peptide</molecule>
    <subcellularLocation>
        <location evidence="1">Secreted</location>
        <location evidence="1">Extracellular space</location>
        <location evidence="1">Extracellular matrix</location>
    </subcellularLocation>
</comment>
<comment type="subcellular location">
    <molecule>Transforming growth factor beta-2</molecule>
    <subcellularLocation>
        <location evidence="1">Secreted</location>
    </subcellularLocation>
</comment>
<comment type="PTM">
    <molecule>Transforming growth factor beta-2</molecule>
    <text evidence="1">The precursor proprotein is cleaved in the Golgi apparatus to form Transforming growth factor beta-2 (TGF-beta-2) and Latency-associated peptide (LAP) chains, which remain non-covalently linked, rendering TGF-beta-2 inactive.</text>
</comment>
<comment type="similarity">
    <text evidence="6">Belongs to the TGF-beta family.</text>
</comment>
<dbReference type="PIR" id="A61439">
    <property type="entry name" value="A61439"/>
</dbReference>
<dbReference type="RefSeq" id="NP_001106723.1">
    <property type="nucleotide sequence ID" value="NM_001113252.1"/>
</dbReference>
<dbReference type="SMR" id="P21214"/>
<dbReference type="FunCoup" id="P21214">
    <property type="interactions" value="960"/>
</dbReference>
<dbReference type="STRING" id="9913.ENSBTAP00000064427"/>
<dbReference type="GlyCosmos" id="P21214">
    <property type="glycosylation" value="3 sites, No reported glycans"/>
</dbReference>
<dbReference type="GlyGen" id="P21214">
    <property type="glycosylation" value="3 sites"/>
</dbReference>
<dbReference type="PaxDb" id="9913-ENSBTAP00000007053"/>
<dbReference type="Ensembl" id="ENSBTAT00000007053.6">
    <property type="protein sequence ID" value="ENSBTAP00000007053.5"/>
    <property type="gene ID" value="ENSBTAG00000005359.7"/>
</dbReference>
<dbReference type="GeneID" id="534069"/>
<dbReference type="KEGG" id="bta:534069"/>
<dbReference type="CTD" id="7042"/>
<dbReference type="VEuPathDB" id="HostDB:ENSBTAG00000005359"/>
<dbReference type="VGNC" id="VGNC:35802">
    <property type="gene designation" value="TGFB2"/>
</dbReference>
<dbReference type="eggNOG" id="KOG3900">
    <property type="taxonomic scope" value="Eukaryota"/>
</dbReference>
<dbReference type="GeneTree" id="ENSGT00940000157390"/>
<dbReference type="HOGENOM" id="CLU_039840_0_0_1"/>
<dbReference type="InParanoid" id="P21214"/>
<dbReference type="OMA" id="NCCLRPF"/>
<dbReference type="OrthoDB" id="6092228at2759"/>
<dbReference type="TreeFam" id="TF318514"/>
<dbReference type="Reactome" id="R-BTA-114608">
    <property type="pathway name" value="Platelet degranulation"/>
</dbReference>
<dbReference type="Reactome" id="R-BTA-2129379">
    <property type="pathway name" value="Molecules associated with elastic fibres"/>
</dbReference>
<dbReference type="Reactome" id="R-BTA-2173789">
    <property type="pathway name" value="TGF-beta receptor signaling activates SMADs"/>
</dbReference>
<dbReference type="Reactome" id="R-BTA-9839389">
    <property type="pathway name" value="TGFBR3 regulates TGF-beta signaling"/>
</dbReference>
<dbReference type="Proteomes" id="UP000009136">
    <property type="component" value="Chromosome 16"/>
</dbReference>
<dbReference type="Bgee" id="ENSBTAG00000005359">
    <property type="expression patterns" value="Expressed in mammary gland and 104 other cell types or tissues"/>
</dbReference>
<dbReference type="GO" id="GO:0031012">
    <property type="term" value="C:extracellular matrix"/>
    <property type="evidence" value="ECO:0000250"/>
    <property type="project" value="AgBase"/>
</dbReference>
<dbReference type="GO" id="GO:0005576">
    <property type="term" value="C:extracellular region"/>
    <property type="evidence" value="ECO:0000250"/>
    <property type="project" value="AgBase"/>
</dbReference>
<dbReference type="GO" id="GO:0005615">
    <property type="term" value="C:extracellular space"/>
    <property type="evidence" value="ECO:0000250"/>
    <property type="project" value="AgBase"/>
</dbReference>
<dbReference type="GO" id="GO:0001540">
    <property type="term" value="F:amyloid-beta binding"/>
    <property type="evidence" value="ECO:0000250"/>
    <property type="project" value="AgBase"/>
</dbReference>
<dbReference type="GO" id="GO:0005125">
    <property type="term" value="F:cytokine activity"/>
    <property type="evidence" value="ECO:0000318"/>
    <property type="project" value="GO_Central"/>
</dbReference>
<dbReference type="GO" id="GO:0008083">
    <property type="term" value="F:growth factor activity"/>
    <property type="evidence" value="ECO:0007669"/>
    <property type="project" value="UniProtKB-KW"/>
</dbReference>
<dbReference type="GO" id="GO:0042803">
    <property type="term" value="F:protein homodimerization activity"/>
    <property type="evidence" value="ECO:0000250"/>
    <property type="project" value="AgBase"/>
</dbReference>
<dbReference type="GO" id="GO:0005102">
    <property type="term" value="F:signaling receptor binding"/>
    <property type="evidence" value="ECO:0000250"/>
    <property type="project" value="AgBase"/>
</dbReference>
<dbReference type="GO" id="GO:0005160">
    <property type="term" value="F:transforming growth factor beta receptor binding"/>
    <property type="evidence" value="ECO:0000250"/>
    <property type="project" value="AgBase"/>
</dbReference>
<dbReference type="GO" id="GO:0005114">
    <property type="term" value="F:type II transforming growth factor beta receptor binding"/>
    <property type="evidence" value="ECO:0000250"/>
    <property type="project" value="AgBase"/>
</dbReference>
<dbReference type="GO" id="GO:0034714">
    <property type="term" value="F:type III transforming growth factor beta receptor binding"/>
    <property type="evidence" value="ECO:0000250"/>
    <property type="project" value="AgBase"/>
</dbReference>
<dbReference type="GO" id="GO:0060317">
    <property type="term" value="P:cardiac epithelial to mesenchymal transition"/>
    <property type="evidence" value="ECO:0000250"/>
    <property type="project" value="AgBase"/>
</dbReference>
<dbReference type="GO" id="GO:0060038">
    <property type="term" value="P:cardiac muscle cell proliferation"/>
    <property type="evidence" value="ECO:0000250"/>
    <property type="project" value="AgBase"/>
</dbReference>
<dbReference type="GO" id="GO:0010002">
    <property type="term" value="P:cardioblast differentiation"/>
    <property type="evidence" value="ECO:0000250"/>
    <property type="project" value="AgBase"/>
</dbReference>
<dbReference type="GO" id="GO:0016477">
    <property type="term" value="P:cell migration"/>
    <property type="evidence" value="ECO:0000250"/>
    <property type="project" value="AgBase"/>
</dbReference>
<dbReference type="GO" id="GO:0000902">
    <property type="term" value="P:cell morphogenesis"/>
    <property type="evidence" value="ECO:0000250"/>
    <property type="project" value="AgBase"/>
</dbReference>
<dbReference type="GO" id="GO:0045216">
    <property type="term" value="P:cell-cell junction organization"/>
    <property type="evidence" value="ECO:0000250"/>
    <property type="project" value="AgBase"/>
</dbReference>
<dbReference type="GO" id="GO:0030199">
    <property type="term" value="P:collagen fibril organization"/>
    <property type="evidence" value="ECO:0000250"/>
    <property type="project" value="AgBase"/>
</dbReference>
<dbReference type="GO" id="GO:0048566">
    <property type="term" value="P:embryonic digestive tract development"/>
    <property type="evidence" value="ECO:0000250"/>
    <property type="project" value="AgBase"/>
</dbReference>
<dbReference type="GO" id="GO:0030855">
    <property type="term" value="P:epithelial cell differentiation"/>
    <property type="evidence" value="ECO:0000250"/>
    <property type="project" value="AgBase"/>
</dbReference>
<dbReference type="GO" id="GO:0001837">
    <property type="term" value="P:epithelial to mesenchymal transition"/>
    <property type="evidence" value="ECO:0000250"/>
    <property type="project" value="AgBase"/>
</dbReference>
<dbReference type="GO" id="GO:0097191">
    <property type="term" value="P:extrinsic apoptotic signaling pathway"/>
    <property type="evidence" value="ECO:0000250"/>
    <property type="project" value="AgBase"/>
</dbReference>
<dbReference type="GO" id="GO:0001654">
    <property type="term" value="P:eye development"/>
    <property type="evidence" value="ECO:0000250"/>
    <property type="project" value="AgBase"/>
</dbReference>
<dbReference type="GO" id="GO:0008347">
    <property type="term" value="P:glial cell migration"/>
    <property type="evidence" value="ECO:0000250"/>
    <property type="project" value="AgBase"/>
</dbReference>
<dbReference type="GO" id="GO:0001942">
    <property type="term" value="P:hair follicle development"/>
    <property type="evidence" value="ECO:0000250"/>
    <property type="project" value="AgBase"/>
</dbReference>
<dbReference type="GO" id="GO:0007507">
    <property type="term" value="P:heart development"/>
    <property type="evidence" value="ECO:0000250"/>
    <property type="project" value="AgBase"/>
</dbReference>
<dbReference type="GO" id="GO:0003007">
    <property type="term" value="P:heart morphogenesis"/>
    <property type="evidence" value="ECO:0000250"/>
    <property type="project" value="AgBase"/>
</dbReference>
<dbReference type="GO" id="GO:0030308">
    <property type="term" value="P:negative regulation of cell growth"/>
    <property type="evidence" value="ECO:0000250"/>
    <property type="project" value="AgBase"/>
</dbReference>
<dbReference type="GO" id="GO:0008285">
    <property type="term" value="P:negative regulation of cell population proliferation"/>
    <property type="evidence" value="ECO:0000250"/>
    <property type="project" value="AgBase"/>
</dbReference>
<dbReference type="GO" id="GO:0050680">
    <property type="term" value="P:negative regulation of epithelial cell proliferation"/>
    <property type="evidence" value="ECO:0000250"/>
    <property type="project" value="AgBase"/>
</dbReference>
<dbReference type="GO" id="GO:0010936">
    <property type="term" value="P:negative regulation of macrophage cytokine production"/>
    <property type="evidence" value="ECO:0000250"/>
    <property type="project" value="AgBase"/>
</dbReference>
<dbReference type="GO" id="GO:0051891">
    <property type="term" value="P:positive regulation of cardioblast differentiation"/>
    <property type="evidence" value="ECO:0000250"/>
    <property type="project" value="AgBase"/>
</dbReference>
<dbReference type="GO" id="GO:0033630">
    <property type="term" value="P:positive regulation of cell adhesion mediated by integrin"/>
    <property type="evidence" value="ECO:0000250"/>
    <property type="project" value="AgBase"/>
</dbReference>
<dbReference type="GO" id="GO:0051781">
    <property type="term" value="P:positive regulation of cell division"/>
    <property type="evidence" value="ECO:0007669"/>
    <property type="project" value="UniProtKB-KW"/>
</dbReference>
<dbReference type="GO" id="GO:0008284">
    <property type="term" value="P:positive regulation of cell population proliferation"/>
    <property type="evidence" value="ECO:0000250"/>
    <property type="project" value="AgBase"/>
</dbReference>
<dbReference type="GO" id="GO:0010634">
    <property type="term" value="P:positive regulation of epithelial cell migration"/>
    <property type="evidence" value="ECO:0000250"/>
    <property type="project" value="AgBase"/>
</dbReference>
<dbReference type="GO" id="GO:0010718">
    <property type="term" value="P:positive regulation of epithelial to mesenchymal transition"/>
    <property type="evidence" value="ECO:0000250"/>
    <property type="project" value="AgBase"/>
</dbReference>
<dbReference type="GO" id="GO:0045823">
    <property type="term" value="P:positive regulation of heart contraction"/>
    <property type="evidence" value="ECO:0000250"/>
    <property type="project" value="AgBase"/>
</dbReference>
<dbReference type="GO" id="GO:0045726">
    <property type="term" value="P:positive regulation of integrin biosynthetic process"/>
    <property type="evidence" value="ECO:0000250"/>
    <property type="project" value="AgBase"/>
</dbReference>
<dbReference type="GO" id="GO:0043525">
    <property type="term" value="P:positive regulation of neuron apoptotic process"/>
    <property type="evidence" value="ECO:0000250"/>
    <property type="project" value="AgBase"/>
</dbReference>
<dbReference type="GO" id="GO:0051897">
    <property type="term" value="P:positive regulation of phosphatidylinositol 3-kinase/protein kinase B signal transduction"/>
    <property type="evidence" value="ECO:0000250"/>
    <property type="project" value="AgBase"/>
</dbReference>
<dbReference type="GO" id="GO:0050714">
    <property type="term" value="P:positive regulation of protein secretion"/>
    <property type="evidence" value="ECO:0000250"/>
    <property type="project" value="AgBase"/>
</dbReference>
<dbReference type="GO" id="GO:0060391">
    <property type="term" value="P:positive regulation of SMAD protein signal transduction"/>
    <property type="evidence" value="ECO:0000250"/>
    <property type="project" value="AgBase"/>
</dbReference>
<dbReference type="GO" id="GO:0032874">
    <property type="term" value="P:positive regulation of stress-activated MAPK cascade"/>
    <property type="evidence" value="ECO:0000250"/>
    <property type="project" value="AgBase"/>
</dbReference>
<dbReference type="GO" id="GO:0051795">
    <property type="term" value="P:positive regulation of timing of catagen"/>
    <property type="evidence" value="ECO:0000250"/>
    <property type="project" value="AgBase"/>
</dbReference>
<dbReference type="GO" id="GO:0042127">
    <property type="term" value="P:regulation of cell population proliferation"/>
    <property type="evidence" value="ECO:0000250"/>
    <property type="project" value="AgBase"/>
</dbReference>
<dbReference type="GO" id="GO:0032909">
    <property type="term" value="P:regulation of transforming growth factor beta2 production"/>
    <property type="evidence" value="ECO:0000250"/>
    <property type="project" value="AgBase"/>
</dbReference>
<dbReference type="GO" id="GO:0032570">
    <property type="term" value="P:response to progesterone"/>
    <property type="evidence" value="ECO:0000250"/>
    <property type="project" value="AgBase"/>
</dbReference>
<dbReference type="GO" id="GO:0009611">
    <property type="term" value="P:response to wounding"/>
    <property type="evidence" value="ECO:0000250"/>
    <property type="project" value="AgBase"/>
</dbReference>
<dbReference type="GO" id="GO:0007435">
    <property type="term" value="P:salivary gland morphogenesis"/>
    <property type="evidence" value="ECO:0000250"/>
    <property type="project" value="AgBase"/>
</dbReference>
<dbReference type="GO" id="GO:0007165">
    <property type="term" value="P:signal transduction"/>
    <property type="evidence" value="ECO:0000250"/>
    <property type="project" value="AgBase"/>
</dbReference>
<dbReference type="GO" id="GO:0023052">
    <property type="term" value="P:signaling"/>
    <property type="evidence" value="ECO:0000250"/>
    <property type="project" value="AgBase"/>
</dbReference>
<dbReference type="GO" id="GO:0007179">
    <property type="term" value="P:transforming growth factor beta receptor signaling pathway"/>
    <property type="evidence" value="ECO:0000250"/>
    <property type="project" value="AgBase"/>
</dbReference>
<dbReference type="CDD" id="cd19385">
    <property type="entry name" value="TGF_beta_TGFB2"/>
    <property type="match status" value="1"/>
</dbReference>
<dbReference type="FunFam" id="2.10.90.10:FF:000004">
    <property type="entry name" value="Transforming growth factor beta"/>
    <property type="match status" value="1"/>
</dbReference>
<dbReference type="FunFam" id="2.60.120.970:FF:000002">
    <property type="entry name" value="Transforming growth factor beta"/>
    <property type="match status" value="1"/>
</dbReference>
<dbReference type="Gene3D" id="2.60.120.970">
    <property type="match status" value="1"/>
</dbReference>
<dbReference type="Gene3D" id="2.10.90.10">
    <property type="entry name" value="Cystine-knot cytokines"/>
    <property type="match status" value="1"/>
</dbReference>
<dbReference type="InterPro" id="IPR029034">
    <property type="entry name" value="Cystine-knot_cytokine"/>
</dbReference>
<dbReference type="InterPro" id="IPR001839">
    <property type="entry name" value="TGF-b_C"/>
</dbReference>
<dbReference type="InterPro" id="IPR001111">
    <property type="entry name" value="TGF-b_propeptide"/>
</dbReference>
<dbReference type="InterPro" id="IPR016319">
    <property type="entry name" value="TGF-beta"/>
</dbReference>
<dbReference type="InterPro" id="IPR015615">
    <property type="entry name" value="TGF-beta-rel"/>
</dbReference>
<dbReference type="InterPro" id="IPR003940">
    <property type="entry name" value="TGFb2"/>
</dbReference>
<dbReference type="InterPro" id="IPR017948">
    <property type="entry name" value="TGFb_CS"/>
</dbReference>
<dbReference type="PANTHER" id="PTHR11848">
    <property type="entry name" value="TGF-BETA FAMILY"/>
    <property type="match status" value="1"/>
</dbReference>
<dbReference type="PANTHER" id="PTHR11848:SF141">
    <property type="entry name" value="TRANSFORMING GROWTH FACTOR BETA-2 PROPROTEIN"/>
    <property type="match status" value="1"/>
</dbReference>
<dbReference type="Pfam" id="PF00019">
    <property type="entry name" value="TGF_beta"/>
    <property type="match status" value="1"/>
</dbReference>
<dbReference type="Pfam" id="PF00688">
    <property type="entry name" value="TGFb_propeptide"/>
    <property type="match status" value="1"/>
</dbReference>
<dbReference type="PIRSF" id="PIRSF001787">
    <property type="entry name" value="TGF-beta"/>
    <property type="match status" value="1"/>
</dbReference>
<dbReference type="PRINTS" id="PR01423">
    <property type="entry name" value="TGFBETA"/>
</dbReference>
<dbReference type="PRINTS" id="PR01425">
    <property type="entry name" value="TGFBETA2"/>
</dbReference>
<dbReference type="SMART" id="SM00204">
    <property type="entry name" value="TGFB"/>
    <property type="match status" value="1"/>
</dbReference>
<dbReference type="SUPFAM" id="SSF57501">
    <property type="entry name" value="Cystine-knot cytokines"/>
    <property type="match status" value="1"/>
</dbReference>
<dbReference type="PROSITE" id="PS00250">
    <property type="entry name" value="TGF_BETA_1"/>
    <property type="match status" value="1"/>
</dbReference>
<dbReference type="PROSITE" id="PS51362">
    <property type="entry name" value="TGF_BETA_2"/>
    <property type="match status" value="1"/>
</dbReference>